<comment type="function">
    <text evidence="2 7 8 9 10 11 12 13 14 15 17">Alpha-1,2-mannosyltransferase, responsible for addition of the first alpha-1,2-linked mannose to form the branches on the mannan backbone of oligosaccharides.</text>
</comment>
<comment type="pathway">
    <text>Protein modification; protein glycosylation.</text>
</comment>
<comment type="subunit">
    <text evidence="6">Interacts with SVP26.</text>
</comment>
<comment type="subcellular location">
    <subcellularLocation>
        <location evidence="4 5 6 7 17">Golgi apparatus membrane</location>
        <topology evidence="4 5 6 7 17">Single-pass type II membrane protein</topology>
    </subcellularLocation>
    <text>Golgi localization depends on SVP26.</text>
</comment>
<comment type="disruption phenotype">
    <text evidence="16">Leads to calcium resistance and vanadate sensitivity.</text>
</comment>
<comment type="miscellaneous">
    <text evidence="3">Present with 6730 molecules/cell in log phase SD medium.</text>
</comment>
<comment type="similarity">
    <text evidence="18">Belongs to the MNN1/MNT family.</text>
</comment>
<accession>P38069</accession>
<accession>D6VQ17</accession>
<proteinExistence type="evidence at protein level"/>
<reference key="1">
    <citation type="journal article" date="1994" name="Yeast">
        <title>The nucleotide sequence of TTP1, a gene encoding a predicted type II membrane protein.</title>
        <authorList>
            <person name="Romero P.A."/>
            <person name="Athanassiadis A."/>
            <person name="Lussier M."/>
            <person name="Herscovics A."/>
        </authorList>
    </citation>
    <scope>NUCLEOTIDE SEQUENCE [GENOMIC DNA]</scope>
</reference>
<reference key="2">
    <citation type="journal article" date="1994" name="EMBO J.">
        <title>Complete DNA sequence of yeast chromosome II.</title>
        <authorList>
            <person name="Feldmann H."/>
            <person name="Aigle M."/>
            <person name="Aljinovic G."/>
            <person name="Andre B."/>
            <person name="Baclet M.C."/>
            <person name="Barthe C."/>
            <person name="Baur A."/>
            <person name="Becam A.-M."/>
            <person name="Biteau N."/>
            <person name="Boles E."/>
            <person name="Brandt T."/>
            <person name="Brendel M."/>
            <person name="Brueckner M."/>
            <person name="Bussereau F."/>
            <person name="Christiansen C."/>
            <person name="Contreras R."/>
            <person name="Crouzet M."/>
            <person name="Cziepluch C."/>
            <person name="Demolis N."/>
            <person name="Delaveau T."/>
            <person name="Doignon F."/>
            <person name="Domdey H."/>
            <person name="Duesterhus S."/>
            <person name="Dubois E."/>
            <person name="Dujon B."/>
            <person name="El Bakkoury M."/>
            <person name="Entian K.-D."/>
            <person name="Feuermann M."/>
            <person name="Fiers W."/>
            <person name="Fobo G.M."/>
            <person name="Fritz C."/>
            <person name="Gassenhuber J."/>
            <person name="Glansdorff N."/>
            <person name="Goffeau A."/>
            <person name="Grivell L.A."/>
            <person name="de Haan M."/>
            <person name="Hein C."/>
            <person name="Herbert C.J."/>
            <person name="Hollenberg C.P."/>
            <person name="Holmstroem K."/>
            <person name="Jacq C."/>
            <person name="Jacquet M."/>
            <person name="Jauniaux J.-C."/>
            <person name="Jonniaux J.-L."/>
            <person name="Kallesoee T."/>
            <person name="Kiesau P."/>
            <person name="Kirchrath L."/>
            <person name="Koetter P."/>
            <person name="Korol S."/>
            <person name="Liebl S."/>
            <person name="Logghe M."/>
            <person name="Lohan A.J.E."/>
            <person name="Louis E.J."/>
            <person name="Li Z.Y."/>
            <person name="Maat M.J."/>
            <person name="Mallet L."/>
            <person name="Mannhaupt G."/>
            <person name="Messenguy F."/>
            <person name="Miosga T."/>
            <person name="Molemans F."/>
            <person name="Mueller S."/>
            <person name="Nasr F."/>
            <person name="Obermaier B."/>
            <person name="Perea J."/>
            <person name="Pierard A."/>
            <person name="Piravandi E."/>
            <person name="Pohl F.M."/>
            <person name="Pohl T.M."/>
            <person name="Potier S."/>
            <person name="Proft M."/>
            <person name="Purnelle B."/>
            <person name="Ramezani Rad M."/>
            <person name="Rieger M."/>
            <person name="Rose M."/>
            <person name="Schaaff-Gerstenschlaeger I."/>
            <person name="Scherens B."/>
            <person name="Schwarzlose C."/>
            <person name="Skala J."/>
            <person name="Slonimski P.P."/>
            <person name="Smits P.H.M."/>
            <person name="Souciet J.-L."/>
            <person name="Steensma H.Y."/>
            <person name="Stucka R."/>
            <person name="Urrestarazu L.A."/>
            <person name="van der Aart Q.J.M."/>
            <person name="Van Dyck L."/>
            <person name="Vassarotti A."/>
            <person name="Vetter I."/>
            <person name="Vierendeels F."/>
            <person name="Vissers S."/>
            <person name="Wagner G."/>
            <person name="de Wergifosse P."/>
            <person name="Wolfe K.H."/>
            <person name="Zagulski M."/>
            <person name="Zimmermann F.K."/>
            <person name="Mewes H.-W."/>
            <person name="Kleine K."/>
        </authorList>
    </citation>
    <scope>NUCLEOTIDE SEQUENCE [LARGE SCALE GENOMIC DNA]</scope>
    <source>
        <strain>ATCC 204508 / S288c</strain>
    </source>
</reference>
<reference key="3">
    <citation type="journal article" date="2014" name="G3 (Bethesda)">
        <title>The reference genome sequence of Saccharomyces cerevisiae: Then and now.</title>
        <authorList>
            <person name="Engel S.R."/>
            <person name="Dietrich F.S."/>
            <person name="Fisk D.G."/>
            <person name="Binkley G."/>
            <person name="Balakrishnan R."/>
            <person name="Costanzo M.C."/>
            <person name="Dwight S.S."/>
            <person name="Hitz B.C."/>
            <person name="Karra K."/>
            <person name="Nash R.S."/>
            <person name="Weng S."/>
            <person name="Wong E.D."/>
            <person name="Lloyd P."/>
            <person name="Skrzypek M.S."/>
            <person name="Miyasato S.R."/>
            <person name="Simison M."/>
            <person name="Cherry J.M."/>
        </authorList>
    </citation>
    <scope>GENOME REANNOTATION</scope>
    <source>
        <strain>ATCC 204508 / S288c</strain>
    </source>
</reference>
<reference key="4">
    <citation type="journal article" date="1973" name="J. Biol. Chem.">
        <title>Genetic control of yeast mannan structure. Isolation and characterization of mannan mutants.</title>
        <authorList>
            <person name="Raschke W.C."/>
            <person name="Kern K.A."/>
            <person name="Antalis C."/>
            <person name="Ballou C.E."/>
        </authorList>
    </citation>
    <scope>FUNCTION</scope>
</reference>
<reference key="5">
    <citation type="journal article" date="1973" name="J. Biol. Chem.">
        <title>Genetic control of yeast mannan structure. Complementation studies and properties of mannan mutants.</title>
        <authorList>
            <person name="Ballou C.E."/>
            <person name="Kern K.A."/>
            <person name="Raschke W.C."/>
        </authorList>
    </citation>
    <scope>FUNCTION</scope>
</reference>
<reference key="6">
    <citation type="journal article" date="1973" name="J. Biol. Chem.">
        <title>A comparison of yeast mannan mutants by electron microscopy.</title>
        <authorList>
            <person name="Hawkins E.R."/>
        </authorList>
    </citation>
    <scope>FUNCTION</scope>
</reference>
<reference key="7">
    <citation type="journal article" date="1974" name="J. Biol. Chem.">
        <title>Characterization of the carbohydrate fragments obtained from Saccharomyces cerevisiae mannan by alkaline degradation.</title>
        <authorList>
            <person name="Nakajima T."/>
            <person name="Ballou C.E."/>
        </authorList>
    </citation>
    <scope>FUNCTION</scope>
</reference>
<reference key="8">
    <citation type="journal article" date="1974" name="J. Biol. Chem.">
        <title>Structure of the linkage region between the polysaccharide and protein parts of Saccharomyces cerevisiae mannan.</title>
        <authorList>
            <person name="Nakajima T."/>
            <person name="Ballou C.E."/>
        </authorList>
    </citation>
    <scope>FUNCTION</scope>
</reference>
<reference key="9">
    <citation type="journal article" date="1975" name="J. Bacteriol.">
        <title>Genetic control of yeast mannan structure: mapping genes mnn2 and mnn4 in Saccharomyces cerevisiae.</title>
        <authorList>
            <person name="Ballou D.L."/>
        </authorList>
    </citation>
    <scope>FUNCTION</scope>
</reference>
<reference key="10">
    <citation type="journal article" date="1978" name="J. Biol. Chem.">
        <title>Biosynthesis of yeast mannan. Properties of a mannosylphosphate transferase in Saccharomyces cerevisiae.</title>
        <authorList>
            <person name="Karson E.M."/>
            <person name="Ballou C.E."/>
        </authorList>
    </citation>
    <scope>FUNCTION</scope>
</reference>
<reference key="11">
    <citation type="journal article" date="1979" name="J. Biol. Chem.">
        <title>Biosynthesis of yeast mannoproteins. Synthesis of mannan outer chain and of dolichol derivatives.</title>
        <authorList>
            <person name="Parodi A.J."/>
        </authorList>
    </citation>
    <scope>FUNCTION</scope>
</reference>
<reference key="12">
    <citation type="journal article" date="1982" name="J. Biol. Chem.">
        <title>Effects of mannoprotein mutations on Saccharomyces cerevisiae core oligosaccharide structure.</title>
        <authorList>
            <person name="Cohen R.E."/>
            <person name="Zhang W."/>
            <person name="Ballou C.E."/>
        </authorList>
    </citation>
    <scope>FUNCTION</scope>
</reference>
<reference key="13">
    <citation type="journal article" date="1990" name="Mol. Microbiol.">
        <title>Identification and characterization of a gene and protein required for glycosylation in the yeast Golgi.</title>
        <authorList>
            <person name="Devlin C."/>
            <person name="Ballou C.E."/>
        </authorList>
    </citation>
    <scope>FUNCTION</scope>
    <scope>SUBCELLULAR LOCATION</scope>
</reference>
<reference key="14">
    <citation type="journal article" date="1997" name="Mol. Gen. Genet.">
        <title>Yeast Crv4/Ttp1, a predicted type II membrane protein, is involved in an event important for growth, functionally overlapping with the event regulated by calcineurin- and Mpk1-mediated pathways.</title>
        <authorList>
            <person name="Nakamura T."/>
            <person name="Ohmoto T."/>
            <person name="Hirata D."/>
            <person name="Tsuchiya E."/>
            <person name="Miyakawa T."/>
        </authorList>
    </citation>
    <scope>DISRUPTION PHENOTYPE</scope>
</reference>
<reference key="15">
    <citation type="journal article" date="1998" name="J. Biol. Chem.">
        <title>Identification of the MNN2 and MNN5 mannosyltransferases required for forming and extending the mannose branches of the outer chain mannans of Saccharomyces cerevisiae.</title>
        <authorList>
            <person name="Rayner J.C."/>
            <person name="Munro S."/>
        </authorList>
    </citation>
    <scope>FUNCTION</scope>
    <scope>GLYCOSYLATION</scope>
    <scope>SUBCELLULAR LOCATION</scope>
</reference>
<reference key="16">
    <citation type="journal article" date="2003" name="Nature">
        <title>Global analysis of protein expression in yeast.</title>
        <authorList>
            <person name="Ghaemmaghami S."/>
            <person name="Huh W.-K."/>
            <person name="Bower K."/>
            <person name="Howson R.W."/>
            <person name="Belle A."/>
            <person name="Dephoure N."/>
            <person name="O'Shea E.K."/>
            <person name="Weissman J.S."/>
        </authorList>
    </citation>
    <scope>LEVEL OF PROTEIN EXPRESSION [LARGE SCALE ANALYSIS]</scope>
</reference>
<reference key="17">
    <citation type="journal article" date="2005" name="Mol. Cell. Biol.">
        <title>Immunoisolation of the yeast Golgi subcompartments and characterization of a novel membrane protein, Svp26, discovered in the Sed5-containing compartments.</title>
        <authorList>
            <person name="Inadome H."/>
            <person name="Noda Y."/>
            <person name="Adachi H."/>
            <person name="Yoda K."/>
        </authorList>
    </citation>
    <scope>IDENTIFICATION BY MASS SPECTROMETRY</scope>
    <scope>SUBCELLULAR LOCATION</scope>
</reference>
<reference key="18">
    <citation type="journal article" date="2008" name="Dev. Cell">
        <title>Golgi localization of glycosyltransferases requires a Vps74p oligomer.</title>
        <authorList>
            <person name="Schmitz K.R."/>
            <person name="Liu J."/>
            <person name="Li S."/>
            <person name="Setty T.G."/>
            <person name="Wood C.S."/>
            <person name="Burd C.G."/>
            <person name="Ferguson K.M."/>
        </authorList>
    </citation>
    <scope>SUBCELLULAR LOCATION</scope>
</reference>
<reference key="19">
    <citation type="journal article" date="2010" name="J. Biol. Chem.">
        <title>Svp26 facilitates endoplasmic reticulum to Golgi transport of a set of mannosyltransferases in Saccharomyces cerevisiae.</title>
        <authorList>
            <person name="Noda Y."/>
            <person name="Yoda K."/>
        </authorList>
    </citation>
    <scope>SUBCELLULAR LOCATION</scope>
    <scope>INTERACTION WITH SVP26</scope>
</reference>
<name>MNN2_YEAST</name>
<gene>
    <name type="primary">MNN2</name>
    <name type="synonym">CRV4</name>
    <name type="synonym">LDB8</name>
    <name type="synonym">TTP1</name>
    <name type="ordered locus">YBR015C</name>
    <name type="ORF">YBR0220</name>
</gene>
<organism>
    <name type="scientific">Saccharomyces cerevisiae (strain ATCC 204508 / S288c)</name>
    <name type="common">Baker's yeast</name>
    <dbReference type="NCBI Taxonomy" id="559292"/>
    <lineage>
        <taxon>Eukaryota</taxon>
        <taxon>Fungi</taxon>
        <taxon>Dikarya</taxon>
        <taxon>Ascomycota</taxon>
        <taxon>Saccharomycotina</taxon>
        <taxon>Saccharomycetes</taxon>
        <taxon>Saccharomycetales</taxon>
        <taxon>Saccharomycetaceae</taxon>
        <taxon>Saccharomyces</taxon>
    </lineage>
</organism>
<dbReference type="EC" id="2.4.1.-"/>
<dbReference type="EMBL" id="U05211">
    <property type="protein sequence ID" value="AAA21860.1"/>
    <property type="molecule type" value="Genomic_DNA"/>
</dbReference>
<dbReference type="EMBL" id="Z35884">
    <property type="protein sequence ID" value="CAA84957.1"/>
    <property type="molecule type" value="Genomic_DNA"/>
</dbReference>
<dbReference type="EMBL" id="BK006936">
    <property type="protein sequence ID" value="DAA07137.1"/>
    <property type="molecule type" value="Genomic_DNA"/>
</dbReference>
<dbReference type="PIR" id="S45870">
    <property type="entry name" value="S45870"/>
</dbReference>
<dbReference type="RefSeq" id="NP_009571.1">
    <property type="nucleotide sequence ID" value="NM_001178363.1"/>
</dbReference>
<dbReference type="SMR" id="P38069"/>
<dbReference type="BioGRID" id="32718">
    <property type="interactions" value="244"/>
</dbReference>
<dbReference type="DIP" id="DIP-7625N"/>
<dbReference type="FunCoup" id="P38069">
    <property type="interactions" value="87"/>
</dbReference>
<dbReference type="STRING" id="4932.YBR015C"/>
<dbReference type="CAZy" id="GT71">
    <property type="family name" value="Glycosyltransferase Family 71"/>
</dbReference>
<dbReference type="GlyCosmos" id="P38069">
    <property type="glycosylation" value="3 sites, No reported glycans"/>
</dbReference>
<dbReference type="GlyGen" id="P38069">
    <property type="glycosylation" value="3 sites"/>
</dbReference>
<dbReference type="iPTMnet" id="P38069"/>
<dbReference type="PaxDb" id="4932-YBR015C"/>
<dbReference type="PeptideAtlas" id="P38069"/>
<dbReference type="EnsemblFungi" id="YBR015C_mRNA">
    <property type="protein sequence ID" value="YBR015C"/>
    <property type="gene ID" value="YBR015C"/>
</dbReference>
<dbReference type="GeneID" id="852303"/>
<dbReference type="KEGG" id="sce:YBR015C"/>
<dbReference type="AGR" id="SGD:S000000219"/>
<dbReference type="SGD" id="S000000219">
    <property type="gene designation" value="MNN2"/>
</dbReference>
<dbReference type="VEuPathDB" id="FungiDB:YBR015C"/>
<dbReference type="eggNOG" id="ENOG502QQ16">
    <property type="taxonomic scope" value="Eukaryota"/>
</dbReference>
<dbReference type="GeneTree" id="ENSGT00940000176544"/>
<dbReference type="HOGENOM" id="CLU_013298_1_1_1"/>
<dbReference type="InParanoid" id="P38069"/>
<dbReference type="OMA" id="KGYQYKA"/>
<dbReference type="OrthoDB" id="430354at2759"/>
<dbReference type="BioCyc" id="MetaCyc:YBR015C-MONOMER"/>
<dbReference type="BioCyc" id="YEAST:YBR015C-MONOMER"/>
<dbReference type="UniPathway" id="UPA00378"/>
<dbReference type="BioGRID-ORCS" id="852303">
    <property type="hits" value="0 hits in 10 CRISPR screens"/>
</dbReference>
<dbReference type="PRO" id="PR:P38069"/>
<dbReference type="Proteomes" id="UP000002311">
    <property type="component" value="Chromosome II"/>
</dbReference>
<dbReference type="RNAct" id="P38069">
    <property type="molecule type" value="protein"/>
</dbReference>
<dbReference type="GO" id="GO:0005794">
    <property type="term" value="C:Golgi apparatus"/>
    <property type="evidence" value="ECO:0000314"/>
    <property type="project" value="SGD"/>
</dbReference>
<dbReference type="GO" id="GO:0000139">
    <property type="term" value="C:Golgi membrane"/>
    <property type="evidence" value="ECO:0007669"/>
    <property type="project" value="UniProtKB-SubCell"/>
</dbReference>
<dbReference type="GO" id="GO:0000026">
    <property type="term" value="F:alpha-1,2-mannosyltransferase activity"/>
    <property type="evidence" value="ECO:0000315"/>
    <property type="project" value="SGD"/>
</dbReference>
<dbReference type="GO" id="GO:0046354">
    <property type="term" value="P:mannan biosynthetic process"/>
    <property type="evidence" value="ECO:0000318"/>
    <property type="project" value="GO_Central"/>
</dbReference>
<dbReference type="GO" id="GO:0006486">
    <property type="term" value="P:protein glycosylation"/>
    <property type="evidence" value="ECO:0000315"/>
    <property type="project" value="SGD"/>
</dbReference>
<dbReference type="GO" id="GO:0035268">
    <property type="term" value="P:protein mannosylation"/>
    <property type="evidence" value="ECO:0000318"/>
    <property type="project" value="GO_Central"/>
</dbReference>
<dbReference type="FunFam" id="3.90.550.10:FF:000177">
    <property type="entry name" value="MNN5p Alpha-1,2-mannosyltransferase"/>
    <property type="match status" value="1"/>
</dbReference>
<dbReference type="InterPro" id="IPR022751">
    <property type="entry name" value="Alpha_mannosyltransferase"/>
</dbReference>
<dbReference type="InterPro" id="IPR029044">
    <property type="entry name" value="Nucleotide-diphossugar_trans"/>
</dbReference>
<dbReference type="PANTHER" id="PTHR31646">
    <property type="entry name" value="ALPHA-1,2-MANNOSYLTRANSFERASE MNN2"/>
    <property type="match status" value="1"/>
</dbReference>
<dbReference type="PANTHER" id="PTHR31646:SF1">
    <property type="entry name" value="ALPHA-1,2-MANNOSYLTRANSFERASE MNN2"/>
    <property type="match status" value="1"/>
</dbReference>
<dbReference type="Pfam" id="PF11051">
    <property type="entry name" value="Mannosyl_trans3"/>
    <property type="match status" value="1"/>
</dbReference>
<dbReference type="SUPFAM" id="SSF53448">
    <property type="entry name" value="Nucleotide-diphospho-sugar transferases"/>
    <property type="match status" value="1"/>
</dbReference>
<feature type="chain" id="PRO_0000065676" description="Alpha-1,2-mannosyltransferase MNN2">
    <location>
        <begin position="1"/>
        <end position="597"/>
    </location>
</feature>
<feature type="topological domain" description="Cytoplasmic" evidence="1">
    <location>
        <begin position="1"/>
        <end position="12"/>
    </location>
</feature>
<feature type="transmembrane region" description="Helical; Signal-anchor for type II membrane protein" evidence="1">
    <location>
        <begin position="13"/>
        <end position="28"/>
    </location>
</feature>
<feature type="topological domain" description="Extracellular" evidence="1">
    <location>
        <begin position="29"/>
        <end position="597"/>
    </location>
</feature>
<feature type="glycosylation site" description="N-linked (GlcNAc...) asparagine" evidence="1">
    <location>
        <position position="34"/>
    </location>
</feature>
<feature type="glycosylation site" description="N-linked (GlcNAc...) asparagine" evidence="1">
    <location>
        <position position="363"/>
    </location>
</feature>
<feature type="glycosylation site" description="N-linked (GlcNAc...) asparagine" evidence="1">
    <location>
        <position position="473"/>
    </location>
</feature>
<feature type="sequence conflict" description="In Ref. 1; AAA21860." evidence="18" ref="1">
    <original>T</original>
    <variation>K</variation>
    <location>
        <position position="287"/>
    </location>
</feature>
<sequence>MLLTKRFSKLFKLTFIVLILCGLFVITNKYMDENTSVKEYKEYLDRYVQSYSNKYSSSSDAASADDSTPLRDNDEAGNEKLKSFYNNVFNFLMVDSPKGSTAKQYNEACLLKGDIGDRPDHYKDLYKLSAKELSKCLELSPDEVASLTKSHKDYVEHIATLVSPKGTYKGSGIATVGGGKFSLMAFLIIKTLRNMGTTLPVEVLIPPGDEGETEFCNKILPKYNSKCIYVSDILPRETIEKFVFKGYQFKSLALIASSFENLLLLDADNFPIKPLDNIFNEEPYVSTGLVMWPDFWRRTTHPLYYDIAGIAVDKKKRVRNSRDDITPPAVYTKDLKDLSDVPLSDLDGTIPDVSTESGQLMINKTKHLATALLSLFYNVNGPTWYYPIFSQKAAGEGDKETFIAAANFYGLSFYQVRTRTGVEGYHDEDGFHGVAMLQHDFVQDYGRYLNAMESIGNKYGGTKSADAIKFDKNYSLEKYTEEFFDNEDLNAKNHVDVMFIHSNFPKFDPYDLSKSNFLTTNGKPARSYTALKKVKNYDIELENFKVLNEYVCVNKNPFKYLDDLLGQDKTEWKRVCGYITDRLAFLESTHDKAIAGK</sequence>
<protein>
    <recommendedName>
        <fullName>Alpha-1,2-mannosyltransferase MNN2</fullName>
        <ecNumber>2.4.1.-</ecNumber>
    </recommendedName>
    <alternativeName>
        <fullName>Calcium resistance and vanadate sensitivity protein 4</fullName>
    </alternativeName>
    <alternativeName>
        <fullName>Mannan synthesis protein MNN2</fullName>
    </alternativeName>
</protein>
<keyword id="KW-0325">Glycoprotein</keyword>
<keyword id="KW-0333">Golgi apparatus</keyword>
<keyword id="KW-0472">Membrane</keyword>
<keyword id="KW-1185">Reference proteome</keyword>
<keyword id="KW-0735">Signal-anchor</keyword>
<keyword id="KW-0808">Transferase</keyword>
<keyword id="KW-0812">Transmembrane</keyword>
<keyword id="KW-1133">Transmembrane helix</keyword>
<evidence type="ECO:0000255" key="1"/>
<evidence type="ECO:0000269" key="2">
    <source>
    </source>
</evidence>
<evidence type="ECO:0000269" key="3">
    <source>
    </source>
</evidence>
<evidence type="ECO:0000269" key="4">
    <source>
    </source>
</evidence>
<evidence type="ECO:0000269" key="5">
    <source>
    </source>
</evidence>
<evidence type="ECO:0000269" key="6">
    <source>
    </source>
</evidence>
<evidence type="ECO:0000269" key="7">
    <source>
    </source>
</evidence>
<evidence type="ECO:0000269" key="8">
    <source>
    </source>
</evidence>
<evidence type="ECO:0000269" key="9">
    <source>
    </source>
</evidence>
<evidence type="ECO:0000269" key="10">
    <source>
    </source>
</evidence>
<evidence type="ECO:0000269" key="11">
    <source>
    </source>
</evidence>
<evidence type="ECO:0000269" key="12">
    <source>
    </source>
</evidence>
<evidence type="ECO:0000269" key="13">
    <source>
    </source>
</evidence>
<evidence type="ECO:0000269" key="14">
    <source>
    </source>
</evidence>
<evidence type="ECO:0000269" key="15">
    <source>
    </source>
</evidence>
<evidence type="ECO:0000269" key="16">
    <source>
    </source>
</evidence>
<evidence type="ECO:0000269" key="17">
    <source>
    </source>
</evidence>
<evidence type="ECO:0000305" key="18"/>